<feature type="chain" id="PRO_0000271999" description="Bacilliredoxin SAR1441">
    <location>
        <begin position="1"/>
        <end position="145"/>
    </location>
</feature>
<evidence type="ECO:0000305" key="1"/>
<sequence length="145" mass="16128">MNAYDAYMKEIAQQMRGELTQNGFTSLETSEEVSEYMNQVNADDTTFVVINSTCGCAAGLARPAAVAVATQNEHRPTNTVTVFAGQDKEATATMREFIQQVPSSPSYALFKGRDLVYFMPREFIEGRDINDIAMDLKDAFDENCK</sequence>
<organism>
    <name type="scientific">Staphylococcus aureus (strain MRSA252)</name>
    <dbReference type="NCBI Taxonomy" id="282458"/>
    <lineage>
        <taxon>Bacteria</taxon>
        <taxon>Bacillati</taxon>
        <taxon>Bacillota</taxon>
        <taxon>Bacilli</taxon>
        <taxon>Bacillales</taxon>
        <taxon>Staphylococcaceae</taxon>
        <taxon>Staphylococcus</taxon>
    </lineage>
</organism>
<comment type="similarity">
    <text evidence="1">Belongs to the bacilliredoxin family.</text>
</comment>
<protein>
    <recommendedName>
        <fullName evidence="1">Bacilliredoxin SAR1441</fullName>
    </recommendedName>
</protein>
<reference key="1">
    <citation type="journal article" date="2004" name="Proc. Natl. Acad. Sci. U.S.A.">
        <title>Complete genomes of two clinical Staphylococcus aureus strains: evidence for the rapid evolution of virulence and drug resistance.</title>
        <authorList>
            <person name="Holden M.T.G."/>
            <person name="Feil E.J."/>
            <person name="Lindsay J.A."/>
            <person name="Peacock S.J."/>
            <person name="Day N.P.J."/>
            <person name="Enright M.C."/>
            <person name="Foster T.J."/>
            <person name="Moore C.E."/>
            <person name="Hurst L."/>
            <person name="Atkin R."/>
            <person name="Barron A."/>
            <person name="Bason N."/>
            <person name="Bentley S.D."/>
            <person name="Chillingworth C."/>
            <person name="Chillingworth T."/>
            <person name="Churcher C."/>
            <person name="Clark L."/>
            <person name="Corton C."/>
            <person name="Cronin A."/>
            <person name="Doggett J."/>
            <person name="Dowd L."/>
            <person name="Feltwell T."/>
            <person name="Hance Z."/>
            <person name="Harris B."/>
            <person name="Hauser H."/>
            <person name="Holroyd S."/>
            <person name="Jagels K."/>
            <person name="James K.D."/>
            <person name="Lennard N."/>
            <person name="Line A."/>
            <person name="Mayes R."/>
            <person name="Moule S."/>
            <person name="Mungall K."/>
            <person name="Ormond D."/>
            <person name="Quail M.A."/>
            <person name="Rabbinowitsch E."/>
            <person name="Rutherford K.M."/>
            <person name="Sanders M."/>
            <person name="Sharp S."/>
            <person name="Simmonds M."/>
            <person name="Stevens K."/>
            <person name="Whitehead S."/>
            <person name="Barrell B.G."/>
            <person name="Spratt B.G."/>
            <person name="Parkhill J."/>
        </authorList>
    </citation>
    <scope>NUCLEOTIDE SEQUENCE [LARGE SCALE GENOMIC DNA]</scope>
    <source>
        <strain>MRSA252</strain>
    </source>
</reference>
<name>Y1441_STAAR</name>
<proteinExistence type="inferred from homology"/>
<gene>
    <name type="ordered locus">SAR1441</name>
</gene>
<dbReference type="EMBL" id="BX571856">
    <property type="protein sequence ID" value="CAG40438.1"/>
    <property type="molecule type" value="Genomic_DNA"/>
</dbReference>
<dbReference type="SMR" id="Q6GGX9"/>
<dbReference type="KEGG" id="sar:SAR1441"/>
<dbReference type="HOGENOM" id="CLU_132521_0_0_9"/>
<dbReference type="Proteomes" id="UP000000596">
    <property type="component" value="Chromosome"/>
</dbReference>
<dbReference type="GO" id="GO:0045454">
    <property type="term" value="P:cell redox homeostasis"/>
    <property type="evidence" value="ECO:0000250"/>
    <property type="project" value="UniProtKB"/>
</dbReference>
<dbReference type="Gene3D" id="3.40.30.10">
    <property type="entry name" value="Glutaredoxin"/>
    <property type="match status" value="1"/>
</dbReference>
<dbReference type="InterPro" id="IPR009474">
    <property type="entry name" value="BrxB/BrxA"/>
</dbReference>
<dbReference type="NCBIfam" id="TIGR04191">
    <property type="entry name" value="YphP_YqiW"/>
    <property type="match status" value="1"/>
</dbReference>
<dbReference type="PANTHER" id="PTHR40052:SF2">
    <property type="entry name" value="BACILLIREDOXIN BRXA"/>
    <property type="match status" value="1"/>
</dbReference>
<dbReference type="PANTHER" id="PTHR40052">
    <property type="entry name" value="UPF0403 PROTEIN YQIW-RELATED"/>
    <property type="match status" value="1"/>
</dbReference>
<dbReference type="Pfam" id="PF06491">
    <property type="entry name" value="Disulph_isomer"/>
    <property type="match status" value="1"/>
</dbReference>
<accession>Q6GGX9</accession>